<keyword id="KW-0997">Cell inner membrane</keyword>
<keyword id="KW-1003">Cell membrane</keyword>
<keyword id="KW-0249">Electron transport</keyword>
<keyword id="KW-0472">Membrane</keyword>
<keyword id="KW-1278">Translocase</keyword>
<keyword id="KW-0812">Transmembrane</keyword>
<keyword id="KW-1133">Transmembrane helix</keyword>
<keyword id="KW-0813">Transport</keyword>
<gene>
    <name evidence="1" type="primary">rnfE</name>
    <name type="ordered locus">VV1187</name>
</gene>
<organism>
    <name type="scientific">Vibrio vulnificus (strain YJ016)</name>
    <dbReference type="NCBI Taxonomy" id="196600"/>
    <lineage>
        <taxon>Bacteria</taxon>
        <taxon>Pseudomonadati</taxon>
        <taxon>Pseudomonadota</taxon>
        <taxon>Gammaproteobacteria</taxon>
        <taxon>Vibrionales</taxon>
        <taxon>Vibrionaceae</taxon>
        <taxon>Vibrio</taxon>
    </lineage>
</organism>
<evidence type="ECO:0000255" key="1">
    <source>
        <dbReference type="HAMAP-Rule" id="MF_00478"/>
    </source>
</evidence>
<evidence type="ECO:0000305" key="2"/>
<name>RNFE_VIBVY</name>
<sequence length="230" mass="24735">MSEHKKLLKNGMWDNNPALVQLLGLCPLLAVSSTVTNALGLGIATLLVLVGSNVTVSLIRNYVPKEIRIPVFVMIIASLVTCVQLLMNAYAYGLYLSLGIFIPLIVTNCIIIGRAEAYASKNDPLPAALDGFWMGMGMTTVLVVLGAMREIIGNGTLFDGADLLLGEWASALRIQVFQFDSSFLLALLPPGAFIGVGLLIALKNVIDTQLKARQPKQEKPAIERARVTNA</sequence>
<accession>Q7MM86</accession>
<reference key="1">
    <citation type="journal article" date="2003" name="Genome Res.">
        <title>Comparative genome analysis of Vibrio vulnificus, a marine pathogen.</title>
        <authorList>
            <person name="Chen C.-Y."/>
            <person name="Wu K.-M."/>
            <person name="Chang Y.-C."/>
            <person name="Chang C.-H."/>
            <person name="Tsai H.-C."/>
            <person name="Liao T.-L."/>
            <person name="Liu Y.-M."/>
            <person name="Chen H.-J."/>
            <person name="Shen A.B.-T."/>
            <person name="Li J.-C."/>
            <person name="Su T.-L."/>
            <person name="Shao C.-P."/>
            <person name="Lee C.-T."/>
            <person name="Hor L.-I."/>
            <person name="Tsai S.-F."/>
        </authorList>
    </citation>
    <scope>NUCLEOTIDE SEQUENCE [LARGE SCALE GENOMIC DNA]</scope>
    <source>
        <strain>YJ016</strain>
    </source>
</reference>
<proteinExistence type="inferred from homology"/>
<dbReference type="EC" id="7.-.-.-" evidence="1"/>
<dbReference type="EMBL" id="BA000037">
    <property type="protein sequence ID" value="BAC93951.1"/>
    <property type="status" value="ALT_INIT"/>
    <property type="molecule type" value="Genomic_DNA"/>
</dbReference>
<dbReference type="RefSeq" id="WP_011080900.1">
    <property type="nucleotide sequence ID" value="NC_005139.1"/>
</dbReference>
<dbReference type="SMR" id="Q7MM86"/>
<dbReference type="STRING" id="672.VV93_v1c11070"/>
<dbReference type="KEGG" id="vvy:VV1187"/>
<dbReference type="eggNOG" id="COG4660">
    <property type="taxonomic scope" value="Bacteria"/>
</dbReference>
<dbReference type="HOGENOM" id="CLU_046659_1_0_6"/>
<dbReference type="Proteomes" id="UP000002675">
    <property type="component" value="Chromosome I"/>
</dbReference>
<dbReference type="GO" id="GO:0005886">
    <property type="term" value="C:plasma membrane"/>
    <property type="evidence" value="ECO:0007669"/>
    <property type="project" value="UniProtKB-SubCell"/>
</dbReference>
<dbReference type="GO" id="GO:0022900">
    <property type="term" value="P:electron transport chain"/>
    <property type="evidence" value="ECO:0007669"/>
    <property type="project" value="UniProtKB-UniRule"/>
</dbReference>
<dbReference type="HAMAP" id="MF_00478">
    <property type="entry name" value="RsxE_RnfE"/>
    <property type="match status" value="1"/>
</dbReference>
<dbReference type="InterPro" id="IPR003667">
    <property type="entry name" value="NqrDE/RnfAE"/>
</dbReference>
<dbReference type="InterPro" id="IPR010968">
    <property type="entry name" value="RnfE"/>
</dbReference>
<dbReference type="NCBIfam" id="NF009070">
    <property type="entry name" value="PRK12405.1"/>
    <property type="match status" value="1"/>
</dbReference>
<dbReference type="NCBIfam" id="TIGR01948">
    <property type="entry name" value="rnfE"/>
    <property type="match status" value="1"/>
</dbReference>
<dbReference type="PANTHER" id="PTHR30586">
    <property type="entry name" value="ELECTRON TRANSPORT COMPLEX PROTEIN RNFE"/>
    <property type="match status" value="1"/>
</dbReference>
<dbReference type="PANTHER" id="PTHR30586:SF0">
    <property type="entry name" value="ION-TRANSLOCATING OXIDOREDUCTASE COMPLEX SUBUNIT E"/>
    <property type="match status" value="1"/>
</dbReference>
<dbReference type="Pfam" id="PF02508">
    <property type="entry name" value="Rnf-Nqr"/>
    <property type="match status" value="1"/>
</dbReference>
<dbReference type="PIRSF" id="PIRSF006102">
    <property type="entry name" value="NQR_DE"/>
    <property type="match status" value="1"/>
</dbReference>
<protein>
    <recommendedName>
        <fullName evidence="1">Ion-translocating oxidoreductase complex subunit E</fullName>
        <ecNumber evidence="1">7.-.-.-</ecNumber>
    </recommendedName>
    <alternativeName>
        <fullName evidence="1">Rnf electron transport complex subunit E</fullName>
    </alternativeName>
</protein>
<feature type="chain" id="PRO_0000214284" description="Ion-translocating oxidoreductase complex subunit E">
    <location>
        <begin position="1"/>
        <end position="230"/>
    </location>
</feature>
<feature type="transmembrane region" description="Helical" evidence="1">
    <location>
        <begin position="39"/>
        <end position="59"/>
    </location>
</feature>
<feature type="transmembrane region" description="Helical" evidence="1">
    <location>
        <begin position="69"/>
        <end position="89"/>
    </location>
</feature>
<feature type="transmembrane region" description="Helical" evidence="1">
    <location>
        <begin position="93"/>
        <end position="113"/>
    </location>
</feature>
<feature type="transmembrane region" description="Helical" evidence="1">
    <location>
        <begin position="125"/>
        <end position="145"/>
    </location>
</feature>
<feature type="transmembrane region" description="Helical" evidence="1">
    <location>
        <begin position="182"/>
        <end position="202"/>
    </location>
</feature>
<comment type="function">
    <text evidence="1">Part of a membrane-bound complex that couples electron transfer with translocation of ions across the membrane.</text>
</comment>
<comment type="subunit">
    <text evidence="1">The complex is composed of six subunits: RnfA, RnfB, RnfC, RnfD, RnfE and RnfG.</text>
</comment>
<comment type="subcellular location">
    <subcellularLocation>
        <location evidence="1">Cell inner membrane</location>
        <topology evidence="1">Multi-pass membrane protein</topology>
    </subcellularLocation>
</comment>
<comment type="similarity">
    <text evidence="1">Belongs to the NqrDE/RnfAE family.</text>
</comment>
<comment type="sequence caution" evidence="2">
    <conflict type="erroneous initiation">
        <sequence resource="EMBL-CDS" id="BAC93951"/>
    </conflict>
</comment>